<protein>
    <recommendedName>
        <fullName>Universal stress protein E</fullName>
    </recommendedName>
</protein>
<name>USPE_ECOL6</name>
<comment type="function">
    <text evidence="1">Required for resistance to DNA-damaging agents.</text>
</comment>
<comment type="subcellular location">
    <subcellularLocation>
        <location evidence="1">Cytoplasm</location>
    </subcellularLocation>
</comment>
<comment type="similarity">
    <text evidence="2">Belongs to the universal stress protein A family.</text>
</comment>
<keyword id="KW-0963">Cytoplasm</keyword>
<keyword id="KW-1185">Reference proteome</keyword>
<evidence type="ECO:0000250" key="1"/>
<evidence type="ECO:0000305" key="2"/>
<organism>
    <name type="scientific">Escherichia coli O6:H1 (strain CFT073 / ATCC 700928 / UPEC)</name>
    <dbReference type="NCBI Taxonomy" id="199310"/>
    <lineage>
        <taxon>Bacteria</taxon>
        <taxon>Pseudomonadati</taxon>
        <taxon>Pseudomonadota</taxon>
        <taxon>Gammaproteobacteria</taxon>
        <taxon>Enterobacterales</taxon>
        <taxon>Enterobacteriaceae</taxon>
        <taxon>Escherichia</taxon>
    </lineage>
</organism>
<dbReference type="EMBL" id="AE014075">
    <property type="protein sequence ID" value="AAN80270.1"/>
    <property type="molecule type" value="Genomic_DNA"/>
</dbReference>
<dbReference type="RefSeq" id="WP_001262123.1">
    <property type="nucleotide sequence ID" value="NZ_CP051263.1"/>
</dbReference>
<dbReference type="SMR" id="P0AAC1"/>
<dbReference type="STRING" id="199310.c1806"/>
<dbReference type="GeneID" id="93775468"/>
<dbReference type="KEGG" id="ecc:c1806"/>
<dbReference type="eggNOG" id="COG0589">
    <property type="taxonomic scope" value="Bacteria"/>
</dbReference>
<dbReference type="HOGENOM" id="CLU_049301_1_2_6"/>
<dbReference type="BioCyc" id="ECOL199310:C1806-MONOMER"/>
<dbReference type="Proteomes" id="UP000001410">
    <property type="component" value="Chromosome"/>
</dbReference>
<dbReference type="GO" id="GO:0005737">
    <property type="term" value="C:cytoplasm"/>
    <property type="evidence" value="ECO:0007669"/>
    <property type="project" value="UniProtKB-SubCell"/>
</dbReference>
<dbReference type="CDD" id="cd23943">
    <property type="entry name" value="USP-E_repeat1"/>
    <property type="match status" value="1"/>
</dbReference>
<dbReference type="CDD" id="cd23660">
    <property type="entry name" value="USP-E_repeat2"/>
    <property type="match status" value="1"/>
</dbReference>
<dbReference type="FunFam" id="3.40.50.12370:FF:000001">
    <property type="entry name" value="Universal stress protein E"/>
    <property type="match status" value="1"/>
</dbReference>
<dbReference type="Gene3D" id="3.40.50.12370">
    <property type="match status" value="1"/>
</dbReference>
<dbReference type="InterPro" id="IPR006016">
    <property type="entry name" value="UspA"/>
</dbReference>
<dbReference type="NCBIfam" id="NF008380">
    <property type="entry name" value="PRK11175.1"/>
    <property type="match status" value="1"/>
</dbReference>
<dbReference type="PANTHER" id="PTHR47892">
    <property type="entry name" value="UNIVERSAL STRESS PROTEIN E"/>
    <property type="match status" value="1"/>
</dbReference>
<dbReference type="PANTHER" id="PTHR47892:SF1">
    <property type="entry name" value="UNIVERSAL STRESS PROTEIN E"/>
    <property type="match status" value="1"/>
</dbReference>
<dbReference type="Pfam" id="PF00582">
    <property type="entry name" value="Usp"/>
    <property type="match status" value="2"/>
</dbReference>
<dbReference type="SUPFAM" id="SSF52402">
    <property type="entry name" value="Adenine nucleotide alpha hydrolases-like"/>
    <property type="match status" value="2"/>
</dbReference>
<feature type="initiator methionine" description="Removed" evidence="1">
    <location>
        <position position="1"/>
    </location>
</feature>
<feature type="chain" id="PRO_0000147419" description="Universal stress protein E">
    <location>
        <begin position="2"/>
        <end position="316"/>
    </location>
</feature>
<proteinExistence type="inferred from homology"/>
<gene>
    <name type="primary">uspE</name>
    <name type="ordered locus">c1806</name>
</gene>
<sequence length="316" mass="35707">MAMYQNMLVVIDPNQDDQPALRRAVYLHQRIGGKIKAFLPIYDFSYEMTTLLSPDERTAMRQGVISQRTAWIHEQAKYYLNAGVPIEIKVVWHNRPFEAIIQEVISGGHDLVLKMAHQHDRLEAVIFTPTDWHLLRKCPSPVWMVKDQPWPEGGKALVAVNLASEEPYHNALNEKLVKETIELAEQVNHTEVHLVGAYPVTPINIAIELPEFDPSVYNDAIRGQHLLAMKALRQKFGINENMTHVEKGLPEEVIPDLAEHLQAGIVVLGTVGRTGISAAFLGNTAEQVIDHLRCDLLVIKPDQYQTPVELDDEEDD</sequence>
<reference key="1">
    <citation type="journal article" date="2002" name="Proc. Natl. Acad. Sci. U.S.A.">
        <title>Extensive mosaic structure revealed by the complete genome sequence of uropathogenic Escherichia coli.</title>
        <authorList>
            <person name="Welch R.A."/>
            <person name="Burland V."/>
            <person name="Plunkett G. III"/>
            <person name="Redford P."/>
            <person name="Roesch P."/>
            <person name="Rasko D."/>
            <person name="Buckles E.L."/>
            <person name="Liou S.-R."/>
            <person name="Boutin A."/>
            <person name="Hackett J."/>
            <person name="Stroud D."/>
            <person name="Mayhew G.F."/>
            <person name="Rose D.J."/>
            <person name="Zhou S."/>
            <person name="Schwartz D.C."/>
            <person name="Perna N.T."/>
            <person name="Mobley H.L.T."/>
            <person name="Donnenberg M.S."/>
            <person name="Blattner F.R."/>
        </authorList>
    </citation>
    <scope>NUCLEOTIDE SEQUENCE [LARGE SCALE GENOMIC DNA]</scope>
    <source>
        <strain>CFT073 / ATCC 700928 / UPEC</strain>
    </source>
</reference>
<accession>P0AAC1</accession>
<accession>P03807</accession>
<accession>P77421</accession>